<keyword id="KW-0687">Ribonucleoprotein</keyword>
<keyword id="KW-0689">Ribosomal protein</keyword>
<keyword id="KW-0694">RNA-binding</keyword>
<keyword id="KW-0699">rRNA-binding</keyword>
<comment type="function">
    <text evidence="1">This protein binds specifically to 23S rRNA; its binding is stimulated by other ribosomal proteins, e.g. L4, L17, and L20. It is important during the early stages of 50S assembly. It makes multiple contacts with different domains of the 23S rRNA in the assembled 50S subunit and ribosome (By similarity).</text>
</comment>
<comment type="function">
    <text evidence="1">The globular domain of the protein is located near the polypeptide exit tunnel on the outside of the subunit, while an extended beta-hairpin is found that lines the wall of the exit tunnel in the center of the 70S ribosome.</text>
</comment>
<comment type="subunit">
    <text evidence="1">Part of the 50S ribosomal subunit.</text>
</comment>
<comment type="similarity">
    <text evidence="1">Belongs to the universal ribosomal protein uL22 family.</text>
</comment>
<evidence type="ECO:0000255" key="1">
    <source>
        <dbReference type="HAMAP-Rule" id="MF_01331"/>
    </source>
</evidence>
<evidence type="ECO:0000305" key="2"/>
<accession>B0JHZ8</accession>
<gene>
    <name evidence="1" type="primary">rplV</name>
    <name evidence="1" type="synonym">rpl22</name>
    <name type="ordered locus">MAE_57380</name>
</gene>
<reference key="1">
    <citation type="journal article" date="2007" name="DNA Res.">
        <title>Complete genomic structure of the bloom-forming toxic cyanobacterium Microcystis aeruginosa NIES-843.</title>
        <authorList>
            <person name="Kaneko T."/>
            <person name="Nakajima N."/>
            <person name="Okamoto S."/>
            <person name="Suzuki I."/>
            <person name="Tanabe Y."/>
            <person name="Tamaoki M."/>
            <person name="Nakamura Y."/>
            <person name="Kasai F."/>
            <person name="Watanabe A."/>
            <person name="Kawashima K."/>
            <person name="Kishida Y."/>
            <person name="Ono A."/>
            <person name="Shimizu Y."/>
            <person name="Takahashi C."/>
            <person name="Minami C."/>
            <person name="Fujishiro T."/>
            <person name="Kohara M."/>
            <person name="Katoh M."/>
            <person name="Nakazaki N."/>
            <person name="Nakayama S."/>
            <person name="Yamada M."/>
            <person name="Tabata S."/>
            <person name="Watanabe M.M."/>
        </authorList>
    </citation>
    <scope>NUCLEOTIDE SEQUENCE [LARGE SCALE GENOMIC DNA]</scope>
    <source>
        <strain>NIES-843 / IAM M-247</strain>
    </source>
</reference>
<protein>
    <recommendedName>
        <fullName evidence="1">Large ribosomal subunit protein uL22</fullName>
    </recommendedName>
    <alternativeName>
        <fullName evidence="2">50S ribosomal protein L22</fullName>
    </alternativeName>
</protein>
<dbReference type="EMBL" id="AP009552">
    <property type="protein sequence ID" value="BAG05560.1"/>
    <property type="molecule type" value="Genomic_DNA"/>
</dbReference>
<dbReference type="RefSeq" id="WP_002796426.1">
    <property type="nucleotide sequence ID" value="NC_010296.1"/>
</dbReference>
<dbReference type="SMR" id="B0JHZ8"/>
<dbReference type="STRING" id="449447.MAE_57380"/>
<dbReference type="PaxDb" id="449447-MAE_57380"/>
<dbReference type="EnsemblBacteria" id="BAG05560">
    <property type="protein sequence ID" value="BAG05560"/>
    <property type="gene ID" value="MAE_57380"/>
</dbReference>
<dbReference type="GeneID" id="66707896"/>
<dbReference type="KEGG" id="mar:MAE_57380"/>
<dbReference type="eggNOG" id="COG0091">
    <property type="taxonomic scope" value="Bacteria"/>
</dbReference>
<dbReference type="HOGENOM" id="CLU_083987_3_3_3"/>
<dbReference type="BioCyc" id="MAER449447:MAE_RS25005-MONOMER"/>
<dbReference type="Proteomes" id="UP000001510">
    <property type="component" value="Chromosome"/>
</dbReference>
<dbReference type="GO" id="GO:0022625">
    <property type="term" value="C:cytosolic large ribosomal subunit"/>
    <property type="evidence" value="ECO:0007669"/>
    <property type="project" value="TreeGrafter"/>
</dbReference>
<dbReference type="GO" id="GO:0019843">
    <property type="term" value="F:rRNA binding"/>
    <property type="evidence" value="ECO:0007669"/>
    <property type="project" value="UniProtKB-UniRule"/>
</dbReference>
<dbReference type="GO" id="GO:0003735">
    <property type="term" value="F:structural constituent of ribosome"/>
    <property type="evidence" value="ECO:0007669"/>
    <property type="project" value="InterPro"/>
</dbReference>
<dbReference type="GO" id="GO:0006412">
    <property type="term" value="P:translation"/>
    <property type="evidence" value="ECO:0007669"/>
    <property type="project" value="UniProtKB-UniRule"/>
</dbReference>
<dbReference type="CDD" id="cd00336">
    <property type="entry name" value="Ribosomal_L22"/>
    <property type="match status" value="1"/>
</dbReference>
<dbReference type="FunFam" id="3.90.470.10:FF:000004">
    <property type="entry name" value="50S ribosomal protein L22, chloroplastic"/>
    <property type="match status" value="1"/>
</dbReference>
<dbReference type="Gene3D" id="3.90.470.10">
    <property type="entry name" value="Ribosomal protein L22/L17"/>
    <property type="match status" value="1"/>
</dbReference>
<dbReference type="HAMAP" id="MF_01331_B">
    <property type="entry name" value="Ribosomal_uL22_B"/>
    <property type="match status" value="1"/>
</dbReference>
<dbReference type="InterPro" id="IPR001063">
    <property type="entry name" value="Ribosomal_uL22"/>
</dbReference>
<dbReference type="InterPro" id="IPR005727">
    <property type="entry name" value="Ribosomal_uL22_bac/chlpt-type"/>
</dbReference>
<dbReference type="InterPro" id="IPR047867">
    <property type="entry name" value="Ribosomal_uL22_bac/org-type"/>
</dbReference>
<dbReference type="InterPro" id="IPR018260">
    <property type="entry name" value="Ribosomal_uL22_CS"/>
</dbReference>
<dbReference type="InterPro" id="IPR036394">
    <property type="entry name" value="Ribosomal_uL22_sf"/>
</dbReference>
<dbReference type="NCBIfam" id="TIGR01044">
    <property type="entry name" value="rplV_bact"/>
    <property type="match status" value="1"/>
</dbReference>
<dbReference type="PANTHER" id="PTHR13501">
    <property type="entry name" value="CHLOROPLAST 50S RIBOSOMAL PROTEIN L22-RELATED"/>
    <property type="match status" value="1"/>
</dbReference>
<dbReference type="PANTHER" id="PTHR13501:SF8">
    <property type="entry name" value="LARGE RIBOSOMAL SUBUNIT PROTEIN UL22M"/>
    <property type="match status" value="1"/>
</dbReference>
<dbReference type="Pfam" id="PF00237">
    <property type="entry name" value="Ribosomal_L22"/>
    <property type="match status" value="1"/>
</dbReference>
<dbReference type="SUPFAM" id="SSF54843">
    <property type="entry name" value="Ribosomal protein L22"/>
    <property type="match status" value="1"/>
</dbReference>
<dbReference type="PROSITE" id="PS00464">
    <property type="entry name" value="RIBOSOMAL_L22"/>
    <property type="match status" value="1"/>
</dbReference>
<organism>
    <name type="scientific">Microcystis aeruginosa (strain NIES-843 / IAM M-2473)</name>
    <dbReference type="NCBI Taxonomy" id="449447"/>
    <lineage>
        <taxon>Bacteria</taxon>
        <taxon>Bacillati</taxon>
        <taxon>Cyanobacteriota</taxon>
        <taxon>Cyanophyceae</taxon>
        <taxon>Oscillatoriophycideae</taxon>
        <taxon>Chroococcales</taxon>
        <taxon>Microcystaceae</taxon>
        <taxon>Microcystis</taxon>
    </lineage>
</organism>
<proteinExistence type="inferred from homology"/>
<feature type="chain" id="PRO_1000142285" description="Large ribosomal subunit protein uL22">
    <location>
        <begin position="1"/>
        <end position="119"/>
    </location>
</feature>
<name>RL22_MICAN</name>
<sequence length="119" mass="13363">MTIDTSNEVKAIARYIRMSPLKVRRVLDQIRGRSYREALIILEFMPYRACDPILKVLRSAVANAEHNEGLDPATLVVSQAFADGGPTLKRFRPRAQGRAYQIRKPTCHITVAVAPSNKD</sequence>